<keyword id="KW-0479">Metal-binding</keyword>
<keyword id="KW-1185">Reference proteome</keyword>
<comment type="similarity">
    <text evidence="2">Belongs to the FAH family.</text>
</comment>
<gene>
    <name type="ordered locus">SAOUHSC_00906</name>
</gene>
<protein>
    <recommendedName>
        <fullName>Uncharacterized protein SAOUHSC_00906</fullName>
    </recommendedName>
</protein>
<evidence type="ECO:0000250" key="1"/>
<evidence type="ECO:0000305" key="2"/>
<sequence>MKFLSFKYNDKTSYGVKVKREDAVWDLTQVFADFAEGDFHPKTLLAGLQQNHTLDFQEQVRKAVVAAEDSGKAEDYKISFNDIEFLPPVTPPNNVIAFGRNYKDHANELNHEVEKLYVFTKAASSLTGDNATIPNHKDITDQLDYEGELGIVIGKSGEKIPKALALDYVYGYTIINDITDRKAQSEQDQAFLSKSLTGGCPMGPYIVTKDELPLPENVNIVTKVNNEIRQDGNTGEMILKIDELIEEISKYVALHPGDIIATGTPAGVGAGMQPPKFLQPGDEVKVTIDNIGTLTTYIAK</sequence>
<feature type="chain" id="PRO_0000303224" description="Uncharacterized protein SAOUHSC_00906">
    <location>
        <begin position="1"/>
        <end position="300"/>
    </location>
</feature>
<feature type="binding site" evidence="1">
    <location>
        <position position="146"/>
    </location>
    <ligand>
        <name>a divalent metal cation</name>
        <dbReference type="ChEBI" id="CHEBI:60240"/>
    </ligand>
</feature>
<feature type="binding site" evidence="1">
    <location>
        <position position="148"/>
    </location>
    <ligand>
        <name>a divalent metal cation</name>
        <dbReference type="ChEBI" id="CHEBI:60240"/>
    </ligand>
</feature>
<feature type="binding site" evidence="1">
    <location>
        <position position="177"/>
    </location>
    <ligand>
        <name>a divalent metal cation</name>
        <dbReference type="ChEBI" id="CHEBI:60240"/>
    </ligand>
</feature>
<proteinExistence type="inferred from homology"/>
<name>Y906_STAA8</name>
<reference key="1">
    <citation type="book" date="2006" name="Gram positive pathogens, 2nd edition">
        <title>The Staphylococcus aureus NCTC 8325 genome.</title>
        <editorList>
            <person name="Fischetti V."/>
            <person name="Novick R."/>
            <person name="Ferretti J."/>
            <person name="Portnoy D."/>
            <person name="Rood J."/>
        </editorList>
        <authorList>
            <person name="Gillaspy A.F."/>
            <person name="Worrell V."/>
            <person name="Orvis J."/>
            <person name="Roe B.A."/>
            <person name="Dyer D.W."/>
            <person name="Iandolo J.J."/>
        </authorList>
    </citation>
    <scope>NUCLEOTIDE SEQUENCE [LARGE SCALE GENOMIC DNA]</scope>
    <source>
        <strain>NCTC 8325 / PS 47</strain>
    </source>
</reference>
<accession>Q2FZT4</accession>
<dbReference type="EMBL" id="CP000253">
    <property type="protein sequence ID" value="ABD30031.1"/>
    <property type="molecule type" value="Genomic_DNA"/>
</dbReference>
<dbReference type="RefSeq" id="WP_000670752.1">
    <property type="nucleotide sequence ID" value="NZ_LS483365.1"/>
</dbReference>
<dbReference type="RefSeq" id="YP_499459.1">
    <property type="nucleotide sequence ID" value="NC_007795.1"/>
</dbReference>
<dbReference type="SMR" id="Q2FZT4"/>
<dbReference type="STRING" id="93061.SAOUHSC_00906"/>
<dbReference type="PaxDb" id="1280-SAXN108_0963"/>
<dbReference type="GeneID" id="3921752"/>
<dbReference type="KEGG" id="sao:SAOUHSC_00906"/>
<dbReference type="PATRIC" id="fig|93061.5.peg.827"/>
<dbReference type="eggNOG" id="COG0179">
    <property type="taxonomic scope" value="Bacteria"/>
</dbReference>
<dbReference type="HOGENOM" id="CLU_028458_3_1_9"/>
<dbReference type="OrthoDB" id="9805307at2"/>
<dbReference type="PRO" id="PR:Q2FZT4"/>
<dbReference type="Proteomes" id="UP000008816">
    <property type="component" value="Chromosome"/>
</dbReference>
<dbReference type="GO" id="GO:0018773">
    <property type="term" value="F:acetylpyruvate hydrolase activity"/>
    <property type="evidence" value="ECO:0000318"/>
    <property type="project" value="GO_Central"/>
</dbReference>
<dbReference type="GO" id="GO:0046872">
    <property type="term" value="F:metal ion binding"/>
    <property type="evidence" value="ECO:0007669"/>
    <property type="project" value="UniProtKB-KW"/>
</dbReference>
<dbReference type="FunFam" id="3.90.850.10:FF:000010">
    <property type="entry name" value="FAA hydrolase family protein"/>
    <property type="match status" value="1"/>
</dbReference>
<dbReference type="Gene3D" id="3.90.850.10">
    <property type="entry name" value="Fumarylacetoacetase-like, C-terminal domain"/>
    <property type="match status" value="1"/>
</dbReference>
<dbReference type="InterPro" id="IPR011234">
    <property type="entry name" value="Fumarylacetoacetase-like_C"/>
</dbReference>
<dbReference type="InterPro" id="IPR036663">
    <property type="entry name" value="Fumarylacetoacetase_C_sf"/>
</dbReference>
<dbReference type="PANTHER" id="PTHR11820">
    <property type="entry name" value="ACYLPYRUVASE"/>
    <property type="match status" value="1"/>
</dbReference>
<dbReference type="PANTHER" id="PTHR11820:SF7">
    <property type="entry name" value="ACYLPYRUVASE FAHD1, MITOCHONDRIAL"/>
    <property type="match status" value="1"/>
</dbReference>
<dbReference type="Pfam" id="PF01557">
    <property type="entry name" value="FAA_hydrolase"/>
    <property type="match status" value="1"/>
</dbReference>
<dbReference type="SUPFAM" id="SSF56529">
    <property type="entry name" value="FAH"/>
    <property type="match status" value="1"/>
</dbReference>
<organism>
    <name type="scientific">Staphylococcus aureus (strain NCTC 8325 / PS 47)</name>
    <dbReference type="NCBI Taxonomy" id="93061"/>
    <lineage>
        <taxon>Bacteria</taxon>
        <taxon>Bacillati</taxon>
        <taxon>Bacillota</taxon>
        <taxon>Bacilli</taxon>
        <taxon>Bacillales</taxon>
        <taxon>Staphylococcaceae</taxon>
        <taxon>Staphylococcus</taxon>
    </lineage>
</organism>